<reference key="1">
    <citation type="journal article" date="2001" name="Nature">
        <title>Complete genome sequence of Salmonella enterica serovar Typhimurium LT2.</title>
        <authorList>
            <person name="McClelland M."/>
            <person name="Sanderson K.E."/>
            <person name="Spieth J."/>
            <person name="Clifton S.W."/>
            <person name="Latreille P."/>
            <person name="Courtney L."/>
            <person name="Porwollik S."/>
            <person name="Ali J."/>
            <person name="Dante M."/>
            <person name="Du F."/>
            <person name="Hou S."/>
            <person name="Layman D."/>
            <person name="Leonard S."/>
            <person name="Nguyen C."/>
            <person name="Scott K."/>
            <person name="Holmes A."/>
            <person name="Grewal N."/>
            <person name="Mulvaney E."/>
            <person name="Ryan E."/>
            <person name="Sun H."/>
            <person name="Florea L."/>
            <person name="Miller W."/>
            <person name="Stoneking T."/>
            <person name="Nhan M."/>
            <person name="Waterston R."/>
            <person name="Wilson R.K."/>
        </authorList>
    </citation>
    <scope>NUCLEOTIDE SEQUENCE [LARGE SCALE GENOMIC DNA]</scope>
    <source>
        <strain>LT2 / SGSC1412 / ATCC 700720</strain>
    </source>
</reference>
<comment type="function">
    <text evidence="1">Part of a sulfur-relay system required for 2-thiolation of 5-methylaminomethyl-2-thiouridine (mnm(5)s(2)U) at tRNA wobble positions. Could accept sulfur from TusD (By similarity).</text>
</comment>
<comment type="subunit">
    <text evidence="1">Interacts with the TusBCD complex. Interacts with MnmA (By similarity).</text>
</comment>
<comment type="subcellular location">
    <subcellularLocation>
        <location evidence="1">Cytoplasm</location>
    </subcellularLocation>
</comment>
<comment type="similarity">
    <text evidence="2">Belongs to the DsrC/TusE family.</text>
</comment>
<accession>Q7CQS8</accession>
<dbReference type="EC" id="2.8.1.-"/>
<dbReference type="EMBL" id="AE006468">
    <property type="protein sequence ID" value="AAL20017.1"/>
    <property type="molecule type" value="Genomic_DNA"/>
</dbReference>
<dbReference type="RefSeq" id="WP_000904446.1">
    <property type="nucleotide sequence ID" value="NC_003197.2"/>
</dbReference>
<dbReference type="SMR" id="Q7CQS8"/>
<dbReference type="STRING" id="99287.STM1084"/>
<dbReference type="PaxDb" id="99287-STM1084"/>
<dbReference type="KEGG" id="stm:STM1084"/>
<dbReference type="PATRIC" id="fig|99287.12.peg.1149"/>
<dbReference type="HOGENOM" id="CLU_153199_1_0_6"/>
<dbReference type="OMA" id="LPKPTNC"/>
<dbReference type="PhylomeDB" id="Q7CQS8"/>
<dbReference type="BioCyc" id="SENT99287:STM1084-MONOMER"/>
<dbReference type="Proteomes" id="UP000001014">
    <property type="component" value="Chromosome"/>
</dbReference>
<dbReference type="GO" id="GO:0005737">
    <property type="term" value="C:cytoplasm"/>
    <property type="evidence" value="ECO:0007669"/>
    <property type="project" value="UniProtKB-SubCell"/>
</dbReference>
<dbReference type="GO" id="GO:0097163">
    <property type="term" value="F:sulfur carrier activity"/>
    <property type="evidence" value="ECO:0000318"/>
    <property type="project" value="GO_Central"/>
</dbReference>
<dbReference type="GO" id="GO:0016740">
    <property type="term" value="F:transferase activity"/>
    <property type="evidence" value="ECO:0007669"/>
    <property type="project" value="UniProtKB-KW"/>
</dbReference>
<dbReference type="GO" id="GO:0002143">
    <property type="term" value="P:tRNA wobble position uridine thiolation"/>
    <property type="evidence" value="ECO:0000318"/>
    <property type="project" value="GO_Central"/>
</dbReference>
<dbReference type="FunFam" id="1.10.10.370:FF:000001">
    <property type="entry name" value="Sulfurtransferase"/>
    <property type="match status" value="1"/>
</dbReference>
<dbReference type="FunFam" id="3.30.1420.10:FF:000001">
    <property type="entry name" value="Sulfurtransferase"/>
    <property type="match status" value="1"/>
</dbReference>
<dbReference type="Gene3D" id="3.30.1420.10">
    <property type="match status" value="1"/>
</dbReference>
<dbReference type="Gene3D" id="1.10.10.370">
    <property type="entry name" value="DsrC-like protein, C-terminal domain"/>
    <property type="match status" value="1"/>
</dbReference>
<dbReference type="InterPro" id="IPR042072">
    <property type="entry name" value="DsrC-like_C"/>
</dbReference>
<dbReference type="InterPro" id="IPR025526">
    <property type="entry name" value="DsrC-like_dom_sf"/>
</dbReference>
<dbReference type="InterPro" id="IPR043163">
    <property type="entry name" value="DsrC-like_N"/>
</dbReference>
<dbReference type="InterPro" id="IPR007453">
    <property type="entry name" value="DsrC/TusE"/>
</dbReference>
<dbReference type="NCBIfam" id="TIGR03342">
    <property type="entry name" value="dsrC_tusE_dsvC"/>
    <property type="match status" value="1"/>
</dbReference>
<dbReference type="NCBIfam" id="NF008562">
    <property type="entry name" value="PRK11508.1"/>
    <property type="match status" value="1"/>
</dbReference>
<dbReference type="PANTHER" id="PTHR37010">
    <property type="entry name" value="SULFURTRANSFERASE TUSE"/>
    <property type="match status" value="1"/>
</dbReference>
<dbReference type="PANTHER" id="PTHR37010:SF1">
    <property type="entry name" value="SULFURTRANSFERASE TUSE"/>
    <property type="match status" value="1"/>
</dbReference>
<dbReference type="Pfam" id="PF04358">
    <property type="entry name" value="DsrC"/>
    <property type="match status" value="1"/>
</dbReference>
<dbReference type="PIRSF" id="PIRSF006223">
    <property type="entry name" value="DsrC_TusE"/>
    <property type="match status" value="1"/>
</dbReference>
<dbReference type="SUPFAM" id="SSF69721">
    <property type="entry name" value="DsrC, the gamma subunit of dissimilatory sulfite reductase"/>
    <property type="match status" value="1"/>
</dbReference>
<feature type="chain" id="PRO_0000234617" description="Sulfurtransferase TusE">
    <location>
        <begin position="1"/>
        <end position="109"/>
    </location>
</feature>
<feature type="active site" description="Cysteine persulfide intermediate" evidence="1">
    <location>
        <position position="108"/>
    </location>
</feature>
<proteinExistence type="inferred from homology"/>
<protein>
    <recommendedName>
        <fullName>Sulfurtransferase TusE</fullName>
        <ecNumber>2.8.1.-</ecNumber>
    </recommendedName>
    <alternativeName>
        <fullName>tRNA 2-thiouridine synthesizing protein E</fullName>
    </alternativeName>
</protein>
<evidence type="ECO:0000250" key="1"/>
<evidence type="ECO:0000305" key="2"/>
<name>TUSE_SALTY</name>
<sequence>MLIFEGKEISTDSEGYLKETTQWSEALAVAIAANEGIELSAEHWEVVRFVREFYLEFNTSPAIRMLVKAMANKFGEEKGNSRYLYRLFPKGPAKQATKIAGLPKPVKCI</sequence>
<organism>
    <name type="scientific">Salmonella typhimurium (strain LT2 / SGSC1412 / ATCC 700720)</name>
    <dbReference type="NCBI Taxonomy" id="99287"/>
    <lineage>
        <taxon>Bacteria</taxon>
        <taxon>Pseudomonadati</taxon>
        <taxon>Pseudomonadota</taxon>
        <taxon>Gammaproteobacteria</taxon>
        <taxon>Enterobacterales</taxon>
        <taxon>Enterobacteriaceae</taxon>
        <taxon>Salmonella</taxon>
    </lineage>
</organism>
<gene>
    <name type="primary">tusE</name>
    <name type="ordered locus">STM1084</name>
</gene>
<keyword id="KW-0963">Cytoplasm</keyword>
<keyword id="KW-1185">Reference proteome</keyword>
<keyword id="KW-0808">Transferase</keyword>
<keyword id="KW-0819">tRNA processing</keyword>